<comment type="function">
    <text evidence="1">Catalyzes the transfer of a dimethylallyl group onto the adenine at position 37 in tRNAs that read codons beginning with uridine, leading to the formation of N6-(dimethylallyl)adenosine (i(6)A).</text>
</comment>
<comment type="catalytic activity">
    <reaction evidence="1">
        <text>adenosine(37) in tRNA + dimethylallyl diphosphate = N(6)-dimethylallyladenosine(37) in tRNA + diphosphate</text>
        <dbReference type="Rhea" id="RHEA:26482"/>
        <dbReference type="Rhea" id="RHEA-COMP:10162"/>
        <dbReference type="Rhea" id="RHEA-COMP:10375"/>
        <dbReference type="ChEBI" id="CHEBI:33019"/>
        <dbReference type="ChEBI" id="CHEBI:57623"/>
        <dbReference type="ChEBI" id="CHEBI:74411"/>
        <dbReference type="ChEBI" id="CHEBI:74415"/>
        <dbReference type="EC" id="2.5.1.75"/>
    </reaction>
</comment>
<comment type="cofactor">
    <cofactor evidence="1">
        <name>Mg(2+)</name>
        <dbReference type="ChEBI" id="CHEBI:18420"/>
    </cofactor>
</comment>
<comment type="subunit">
    <text evidence="1">Monomer.</text>
</comment>
<comment type="similarity">
    <text evidence="1">Belongs to the IPP transferase family.</text>
</comment>
<sequence>MNDVTEASLPKAIFLMGPTASGKTALAIALRKVLPVELISVDSALIYRGMDIGTAKPDAAELSAAPHRLLDILDPAEAYSAADFRRDALAAMADIVAAGRIPLLVGGTMLYFKALLEGLSPLPSADPEVRARIEQQAAEQGWNALHQQLQEIDPVAAARIHPNDPQRLSRALEVFFISGKTLTELTQTSGDALPYQVHQFAIAPASRELLHQRIEQRFHQMLASGFEAEVRALFARGDLHTDMPSIRCVGYRQMWSYLNGEIPYDEMVYRGVCATRQLAKRQVTWLRGWEGVHWLDSEQPEQALNKVLQVVGASQN</sequence>
<name>MIAA_KLEP3</name>
<organism>
    <name type="scientific">Klebsiella pneumoniae (strain 342)</name>
    <dbReference type="NCBI Taxonomy" id="507522"/>
    <lineage>
        <taxon>Bacteria</taxon>
        <taxon>Pseudomonadati</taxon>
        <taxon>Pseudomonadota</taxon>
        <taxon>Gammaproteobacteria</taxon>
        <taxon>Enterobacterales</taxon>
        <taxon>Enterobacteriaceae</taxon>
        <taxon>Klebsiella/Raoultella group</taxon>
        <taxon>Klebsiella</taxon>
        <taxon>Klebsiella pneumoniae complex</taxon>
    </lineage>
</organism>
<accession>B5Y333</accession>
<keyword id="KW-0067">ATP-binding</keyword>
<keyword id="KW-0460">Magnesium</keyword>
<keyword id="KW-0547">Nucleotide-binding</keyword>
<keyword id="KW-0808">Transferase</keyword>
<keyword id="KW-0819">tRNA processing</keyword>
<dbReference type="EC" id="2.5.1.75" evidence="1"/>
<dbReference type="EMBL" id="CP000964">
    <property type="protein sequence ID" value="ACI08698.1"/>
    <property type="molecule type" value="Genomic_DNA"/>
</dbReference>
<dbReference type="SMR" id="B5Y333"/>
<dbReference type="KEGG" id="kpe:KPK_5099"/>
<dbReference type="HOGENOM" id="CLU_032616_0_0_6"/>
<dbReference type="Proteomes" id="UP000001734">
    <property type="component" value="Chromosome"/>
</dbReference>
<dbReference type="GO" id="GO:0005524">
    <property type="term" value="F:ATP binding"/>
    <property type="evidence" value="ECO:0007669"/>
    <property type="project" value="UniProtKB-UniRule"/>
</dbReference>
<dbReference type="GO" id="GO:0052381">
    <property type="term" value="F:tRNA dimethylallyltransferase activity"/>
    <property type="evidence" value="ECO:0007669"/>
    <property type="project" value="UniProtKB-UniRule"/>
</dbReference>
<dbReference type="GO" id="GO:0006400">
    <property type="term" value="P:tRNA modification"/>
    <property type="evidence" value="ECO:0007669"/>
    <property type="project" value="TreeGrafter"/>
</dbReference>
<dbReference type="FunFam" id="1.10.20.140:FF:000001">
    <property type="entry name" value="tRNA dimethylallyltransferase"/>
    <property type="match status" value="1"/>
</dbReference>
<dbReference type="FunFam" id="1.10.287.890:FF:000001">
    <property type="entry name" value="tRNA dimethylallyltransferase"/>
    <property type="match status" value="1"/>
</dbReference>
<dbReference type="Gene3D" id="1.10.20.140">
    <property type="match status" value="1"/>
</dbReference>
<dbReference type="Gene3D" id="1.10.287.890">
    <property type="entry name" value="Crystal structure of tRNA isopentenylpyrophosphate transferase (bh2366) domain"/>
    <property type="match status" value="1"/>
</dbReference>
<dbReference type="Gene3D" id="3.40.50.300">
    <property type="entry name" value="P-loop containing nucleotide triphosphate hydrolases"/>
    <property type="match status" value="1"/>
</dbReference>
<dbReference type="HAMAP" id="MF_00185">
    <property type="entry name" value="IPP_trans"/>
    <property type="match status" value="1"/>
</dbReference>
<dbReference type="InterPro" id="IPR039657">
    <property type="entry name" value="Dimethylallyltransferase"/>
</dbReference>
<dbReference type="InterPro" id="IPR018022">
    <property type="entry name" value="IPT"/>
</dbReference>
<dbReference type="InterPro" id="IPR027417">
    <property type="entry name" value="P-loop_NTPase"/>
</dbReference>
<dbReference type="NCBIfam" id="TIGR00174">
    <property type="entry name" value="miaA"/>
    <property type="match status" value="1"/>
</dbReference>
<dbReference type="PANTHER" id="PTHR11088">
    <property type="entry name" value="TRNA DIMETHYLALLYLTRANSFERASE"/>
    <property type="match status" value="1"/>
</dbReference>
<dbReference type="PANTHER" id="PTHR11088:SF60">
    <property type="entry name" value="TRNA DIMETHYLALLYLTRANSFERASE"/>
    <property type="match status" value="1"/>
</dbReference>
<dbReference type="Pfam" id="PF01715">
    <property type="entry name" value="IPPT"/>
    <property type="match status" value="1"/>
</dbReference>
<dbReference type="SUPFAM" id="SSF52540">
    <property type="entry name" value="P-loop containing nucleoside triphosphate hydrolases"/>
    <property type="match status" value="1"/>
</dbReference>
<gene>
    <name evidence="1" type="primary">miaA</name>
    <name type="ordered locus">KPK_5099</name>
</gene>
<reference key="1">
    <citation type="journal article" date="2008" name="PLoS Genet.">
        <title>Complete genome sequence of the N2-fixing broad host range endophyte Klebsiella pneumoniae 342 and virulence predictions verified in mice.</title>
        <authorList>
            <person name="Fouts D.E."/>
            <person name="Tyler H.L."/>
            <person name="DeBoy R.T."/>
            <person name="Daugherty S."/>
            <person name="Ren Q."/>
            <person name="Badger J.H."/>
            <person name="Durkin A.S."/>
            <person name="Huot H."/>
            <person name="Shrivastava S."/>
            <person name="Kothari S."/>
            <person name="Dodson R.J."/>
            <person name="Mohamoud Y."/>
            <person name="Khouri H."/>
            <person name="Roesch L.F.W."/>
            <person name="Krogfelt K.A."/>
            <person name="Struve C."/>
            <person name="Triplett E.W."/>
            <person name="Methe B.A."/>
        </authorList>
    </citation>
    <scope>NUCLEOTIDE SEQUENCE [LARGE SCALE GENOMIC DNA]</scope>
    <source>
        <strain>342</strain>
    </source>
</reference>
<evidence type="ECO:0000255" key="1">
    <source>
        <dbReference type="HAMAP-Rule" id="MF_00185"/>
    </source>
</evidence>
<proteinExistence type="inferred from homology"/>
<feature type="chain" id="PRO_1000098667" description="tRNA dimethylallyltransferase">
    <location>
        <begin position="1"/>
        <end position="316"/>
    </location>
</feature>
<feature type="region of interest" description="Interaction with substrate tRNA" evidence="1">
    <location>
        <begin position="42"/>
        <end position="45"/>
    </location>
</feature>
<feature type="region of interest" description="Interaction with substrate tRNA" evidence="1">
    <location>
        <begin position="166"/>
        <end position="170"/>
    </location>
</feature>
<feature type="region of interest" description="Interaction with substrate tRNA" evidence="1">
    <location>
        <begin position="247"/>
        <end position="252"/>
    </location>
</feature>
<feature type="binding site" evidence="1">
    <location>
        <begin position="17"/>
        <end position="24"/>
    </location>
    <ligand>
        <name>ATP</name>
        <dbReference type="ChEBI" id="CHEBI:30616"/>
    </ligand>
</feature>
<feature type="binding site" evidence="1">
    <location>
        <begin position="19"/>
        <end position="24"/>
    </location>
    <ligand>
        <name>substrate</name>
    </ligand>
</feature>
<feature type="site" description="Interaction with substrate tRNA" evidence="1">
    <location>
        <position position="108"/>
    </location>
</feature>
<feature type="site" description="Interaction with substrate tRNA" evidence="1">
    <location>
        <position position="130"/>
    </location>
</feature>
<protein>
    <recommendedName>
        <fullName evidence="1">tRNA dimethylallyltransferase</fullName>
        <ecNumber evidence="1">2.5.1.75</ecNumber>
    </recommendedName>
    <alternativeName>
        <fullName evidence="1">Dimethylallyl diphosphate:tRNA dimethylallyltransferase</fullName>
        <shortName evidence="1">DMAPP:tRNA dimethylallyltransferase</shortName>
        <shortName evidence="1">DMATase</shortName>
    </alternativeName>
    <alternativeName>
        <fullName evidence="1">Isopentenyl-diphosphate:tRNA isopentenyltransferase</fullName>
        <shortName evidence="1">IPP transferase</shortName>
        <shortName evidence="1">IPPT</shortName>
        <shortName evidence="1">IPTase</shortName>
    </alternativeName>
</protein>